<sequence length="207" mass="22809">MDTLIREFDVALRAIAGATRAERANPADRLAPETEQMNPEERRHVSGLMRINHVGEVCAQALYQAQKLTARTPAVRAQMDAAAKEEEDHLAWCADRLRELGSRPSLLNPVWYAGAFAIGVLAGRAGDKVSLGFVAETERQVEHHLTSHLDRLPTTDSRSRAILEQMRDDEVRHGDAARNAGGIPLPGPVRALMQVASRVMTTTAYRI</sequence>
<organism>
    <name type="scientific">Cupriavidus metallidurans (strain ATCC 43123 / DSM 2839 / NBRC 102507 / CH34)</name>
    <name type="common">Ralstonia metallidurans</name>
    <dbReference type="NCBI Taxonomy" id="266264"/>
    <lineage>
        <taxon>Bacteria</taxon>
        <taxon>Pseudomonadati</taxon>
        <taxon>Pseudomonadota</taxon>
        <taxon>Betaproteobacteria</taxon>
        <taxon>Burkholderiales</taxon>
        <taxon>Burkholderiaceae</taxon>
        <taxon>Cupriavidus</taxon>
    </lineage>
</organism>
<accession>Q1LIL6</accession>
<gene>
    <name evidence="1" type="primary">coq7</name>
    <name type="ordered locus">Rmet_3138</name>
</gene>
<comment type="function">
    <text evidence="1">Catalyzes the hydroxylation of 2-nonaprenyl-3-methyl-6-methoxy-1,4-benzoquinol during ubiquinone biosynthesis.</text>
</comment>
<comment type="catalytic activity">
    <reaction evidence="1">
        <text>a 5-methoxy-2-methyl-3-(all-trans-polyprenyl)benzene-1,4-diol + AH2 + O2 = a 3-demethylubiquinol + A + H2O</text>
        <dbReference type="Rhea" id="RHEA:50908"/>
        <dbReference type="Rhea" id="RHEA-COMP:10859"/>
        <dbReference type="Rhea" id="RHEA-COMP:10914"/>
        <dbReference type="ChEBI" id="CHEBI:13193"/>
        <dbReference type="ChEBI" id="CHEBI:15377"/>
        <dbReference type="ChEBI" id="CHEBI:15379"/>
        <dbReference type="ChEBI" id="CHEBI:17499"/>
        <dbReference type="ChEBI" id="CHEBI:84167"/>
        <dbReference type="ChEBI" id="CHEBI:84422"/>
        <dbReference type="EC" id="1.14.99.60"/>
    </reaction>
</comment>
<comment type="cofactor">
    <cofactor evidence="1">
        <name>Fe cation</name>
        <dbReference type="ChEBI" id="CHEBI:24875"/>
    </cofactor>
    <text evidence="1">Binds 2 iron ions per subunit.</text>
</comment>
<comment type="pathway">
    <text evidence="1">Cofactor biosynthesis; ubiquinone biosynthesis.</text>
</comment>
<comment type="subcellular location">
    <subcellularLocation>
        <location evidence="1">Cell membrane</location>
        <topology evidence="1">Peripheral membrane protein</topology>
    </subcellularLocation>
</comment>
<comment type="similarity">
    <text evidence="1">Belongs to the COQ7 family.</text>
</comment>
<proteinExistence type="inferred from homology"/>
<evidence type="ECO:0000255" key="1">
    <source>
        <dbReference type="HAMAP-Rule" id="MF_01658"/>
    </source>
</evidence>
<evidence type="ECO:0000256" key="2">
    <source>
        <dbReference type="SAM" id="MobiDB-lite"/>
    </source>
</evidence>
<feature type="chain" id="PRO_0000338727" description="3-demethoxyubiquinol 3-hydroxylase">
    <location>
        <begin position="1"/>
        <end position="207"/>
    </location>
</feature>
<feature type="region of interest" description="Disordered" evidence="2">
    <location>
        <begin position="22"/>
        <end position="41"/>
    </location>
</feature>
<feature type="compositionally biased region" description="Basic and acidic residues" evidence="2">
    <location>
        <begin position="22"/>
        <end position="32"/>
    </location>
</feature>
<feature type="binding site" evidence="1">
    <location>
        <position position="56"/>
    </location>
    <ligand>
        <name>Fe cation</name>
        <dbReference type="ChEBI" id="CHEBI:24875"/>
        <label>1</label>
    </ligand>
</feature>
<feature type="binding site" evidence="1">
    <location>
        <position position="86"/>
    </location>
    <ligand>
        <name>Fe cation</name>
        <dbReference type="ChEBI" id="CHEBI:24875"/>
        <label>1</label>
    </ligand>
</feature>
<feature type="binding site" evidence="1">
    <location>
        <position position="86"/>
    </location>
    <ligand>
        <name>Fe cation</name>
        <dbReference type="ChEBI" id="CHEBI:24875"/>
        <label>2</label>
    </ligand>
</feature>
<feature type="binding site" evidence="1">
    <location>
        <position position="89"/>
    </location>
    <ligand>
        <name>Fe cation</name>
        <dbReference type="ChEBI" id="CHEBI:24875"/>
        <label>1</label>
    </ligand>
</feature>
<feature type="binding site" evidence="1">
    <location>
        <position position="138"/>
    </location>
    <ligand>
        <name>Fe cation</name>
        <dbReference type="ChEBI" id="CHEBI:24875"/>
        <label>2</label>
    </ligand>
</feature>
<feature type="binding site" evidence="1">
    <location>
        <position position="170"/>
    </location>
    <ligand>
        <name>Fe cation</name>
        <dbReference type="ChEBI" id="CHEBI:24875"/>
        <label>1</label>
    </ligand>
</feature>
<feature type="binding site" evidence="1">
    <location>
        <position position="170"/>
    </location>
    <ligand>
        <name>Fe cation</name>
        <dbReference type="ChEBI" id="CHEBI:24875"/>
        <label>2</label>
    </ligand>
</feature>
<feature type="binding site" evidence="1">
    <location>
        <position position="173"/>
    </location>
    <ligand>
        <name>Fe cation</name>
        <dbReference type="ChEBI" id="CHEBI:24875"/>
        <label>2</label>
    </ligand>
</feature>
<protein>
    <recommendedName>
        <fullName evidence="1">3-demethoxyubiquinol 3-hydroxylase</fullName>
        <shortName evidence="1">DMQ hydroxylase</shortName>
        <ecNumber evidence="1">1.14.99.60</ecNumber>
    </recommendedName>
    <alternativeName>
        <fullName evidence="1">2-nonaprenyl-3-methyl-6-methoxy-1,4-benzoquinol hydroxylase</fullName>
    </alternativeName>
</protein>
<keyword id="KW-1003">Cell membrane</keyword>
<keyword id="KW-0408">Iron</keyword>
<keyword id="KW-0472">Membrane</keyword>
<keyword id="KW-0479">Metal-binding</keyword>
<keyword id="KW-0503">Monooxygenase</keyword>
<keyword id="KW-0560">Oxidoreductase</keyword>
<keyword id="KW-1185">Reference proteome</keyword>
<keyword id="KW-0831">Ubiquinone biosynthesis</keyword>
<dbReference type="EC" id="1.14.99.60" evidence="1"/>
<dbReference type="EMBL" id="CP000352">
    <property type="protein sequence ID" value="ABF10010.1"/>
    <property type="molecule type" value="Genomic_DNA"/>
</dbReference>
<dbReference type="RefSeq" id="WP_008650278.1">
    <property type="nucleotide sequence ID" value="NC_007973.1"/>
</dbReference>
<dbReference type="SMR" id="Q1LIL6"/>
<dbReference type="STRING" id="266264.Rmet_3138"/>
<dbReference type="GeneID" id="60820486"/>
<dbReference type="KEGG" id="rme:Rmet_3138"/>
<dbReference type="eggNOG" id="COG2941">
    <property type="taxonomic scope" value="Bacteria"/>
</dbReference>
<dbReference type="HOGENOM" id="CLU_088601_0_0_4"/>
<dbReference type="UniPathway" id="UPA00232"/>
<dbReference type="Proteomes" id="UP000002429">
    <property type="component" value="Chromosome"/>
</dbReference>
<dbReference type="GO" id="GO:0005886">
    <property type="term" value="C:plasma membrane"/>
    <property type="evidence" value="ECO:0007669"/>
    <property type="project" value="UniProtKB-SubCell"/>
</dbReference>
<dbReference type="GO" id="GO:0008682">
    <property type="term" value="F:3-demethoxyubiquinol 3-hydroxylase activity"/>
    <property type="evidence" value="ECO:0007669"/>
    <property type="project" value="UniProtKB-EC"/>
</dbReference>
<dbReference type="GO" id="GO:0046872">
    <property type="term" value="F:metal ion binding"/>
    <property type="evidence" value="ECO:0007669"/>
    <property type="project" value="UniProtKB-KW"/>
</dbReference>
<dbReference type="GO" id="GO:0006744">
    <property type="term" value="P:ubiquinone biosynthetic process"/>
    <property type="evidence" value="ECO:0007669"/>
    <property type="project" value="UniProtKB-UniRule"/>
</dbReference>
<dbReference type="CDD" id="cd01042">
    <property type="entry name" value="DMQH"/>
    <property type="match status" value="1"/>
</dbReference>
<dbReference type="Gene3D" id="1.20.1260.10">
    <property type="match status" value="1"/>
</dbReference>
<dbReference type="HAMAP" id="MF_01658">
    <property type="entry name" value="COQ7"/>
    <property type="match status" value="1"/>
</dbReference>
<dbReference type="InterPro" id="IPR047809">
    <property type="entry name" value="COQ7_proteobact"/>
</dbReference>
<dbReference type="InterPro" id="IPR012347">
    <property type="entry name" value="Ferritin-like"/>
</dbReference>
<dbReference type="InterPro" id="IPR009078">
    <property type="entry name" value="Ferritin-like_SF"/>
</dbReference>
<dbReference type="InterPro" id="IPR011566">
    <property type="entry name" value="Ubq_synth_Coq7"/>
</dbReference>
<dbReference type="NCBIfam" id="NF033656">
    <property type="entry name" value="DMQ_monoox_COQ7"/>
    <property type="match status" value="1"/>
</dbReference>
<dbReference type="PANTHER" id="PTHR11237:SF4">
    <property type="entry name" value="5-DEMETHOXYUBIQUINONE HYDROXYLASE, MITOCHONDRIAL"/>
    <property type="match status" value="1"/>
</dbReference>
<dbReference type="PANTHER" id="PTHR11237">
    <property type="entry name" value="COENZYME Q10 BIOSYNTHESIS PROTEIN 7"/>
    <property type="match status" value="1"/>
</dbReference>
<dbReference type="Pfam" id="PF03232">
    <property type="entry name" value="COQ7"/>
    <property type="match status" value="1"/>
</dbReference>
<dbReference type="SUPFAM" id="SSF47240">
    <property type="entry name" value="Ferritin-like"/>
    <property type="match status" value="1"/>
</dbReference>
<name>COQ7_CUPMC</name>
<reference key="1">
    <citation type="journal article" date="2010" name="PLoS ONE">
        <title>The complete genome sequence of Cupriavidus metallidurans strain CH34, a master survivalist in harsh and anthropogenic environments.</title>
        <authorList>
            <person name="Janssen P.J."/>
            <person name="Van Houdt R."/>
            <person name="Moors H."/>
            <person name="Monsieurs P."/>
            <person name="Morin N."/>
            <person name="Michaux A."/>
            <person name="Benotmane M.A."/>
            <person name="Leys N."/>
            <person name="Vallaeys T."/>
            <person name="Lapidus A."/>
            <person name="Monchy S."/>
            <person name="Medigue C."/>
            <person name="Taghavi S."/>
            <person name="McCorkle S."/>
            <person name="Dunn J."/>
            <person name="van der Lelie D."/>
            <person name="Mergeay M."/>
        </authorList>
    </citation>
    <scope>NUCLEOTIDE SEQUENCE [LARGE SCALE GENOMIC DNA]</scope>
    <source>
        <strain>ATCC 43123 / DSM 2839 / NBRC 102507 / CH34</strain>
    </source>
</reference>